<reference key="1">
    <citation type="journal article" date="2009" name="J. Bacteriol.">
        <title>Genome sequences of three Agrobacterium biovars help elucidate the evolution of multichromosome genomes in bacteria.</title>
        <authorList>
            <person name="Slater S.C."/>
            <person name="Goldman B.S."/>
            <person name="Goodner B."/>
            <person name="Setubal J.C."/>
            <person name="Farrand S.K."/>
            <person name="Nester E.W."/>
            <person name="Burr T.J."/>
            <person name="Banta L."/>
            <person name="Dickerman A.W."/>
            <person name="Paulsen I."/>
            <person name="Otten L."/>
            <person name="Suen G."/>
            <person name="Welch R."/>
            <person name="Almeida N.F."/>
            <person name="Arnold F."/>
            <person name="Burton O.T."/>
            <person name="Du Z."/>
            <person name="Ewing A."/>
            <person name="Godsy E."/>
            <person name="Heisel S."/>
            <person name="Houmiel K.L."/>
            <person name="Jhaveri J."/>
            <person name="Lu J."/>
            <person name="Miller N.M."/>
            <person name="Norton S."/>
            <person name="Chen Q."/>
            <person name="Phoolcharoen W."/>
            <person name="Ohlin V."/>
            <person name="Ondrusek D."/>
            <person name="Pride N."/>
            <person name="Stricklin S.L."/>
            <person name="Sun J."/>
            <person name="Wheeler C."/>
            <person name="Wilson L."/>
            <person name="Zhu H."/>
            <person name="Wood D.W."/>
        </authorList>
    </citation>
    <scope>NUCLEOTIDE SEQUENCE [LARGE SCALE GENOMIC DNA]</scope>
    <source>
        <strain>K84 / ATCC BAA-868</strain>
    </source>
</reference>
<gene>
    <name evidence="1" type="primary">rpsD</name>
    <name type="ordered locus">Arad_2602</name>
</gene>
<organism>
    <name type="scientific">Rhizobium rhizogenes (strain K84 / ATCC BAA-868)</name>
    <name type="common">Agrobacterium radiobacter</name>
    <dbReference type="NCBI Taxonomy" id="311403"/>
    <lineage>
        <taxon>Bacteria</taxon>
        <taxon>Pseudomonadati</taxon>
        <taxon>Pseudomonadota</taxon>
        <taxon>Alphaproteobacteria</taxon>
        <taxon>Hyphomicrobiales</taxon>
        <taxon>Rhizobiaceae</taxon>
        <taxon>Rhizobium/Agrobacterium group</taxon>
        <taxon>Rhizobium</taxon>
    </lineage>
</organism>
<evidence type="ECO:0000255" key="1">
    <source>
        <dbReference type="HAMAP-Rule" id="MF_01306"/>
    </source>
</evidence>
<evidence type="ECO:0000256" key="2">
    <source>
        <dbReference type="SAM" id="MobiDB-lite"/>
    </source>
</evidence>
<evidence type="ECO:0000305" key="3"/>
<keyword id="KW-0687">Ribonucleoprotein</keyword>
<keyword id="KW-0689">Ribosomal protein</keyword>
<keyword id="KW-0694">RNA-binding</keyword>
<keyword id="KW-0699">rRNA-binding</keyword>
<sequence>MSKRESSKYKIDRRMGENIWGRPKSPVNRREYGPGQHGQRRKGKLSDFGVQLRAKQKLKGYYGDLREKQFRATFDEANRRKGDTSENLIGLLESRLDAIVYRAKFVPTVFAARQFVNHGHVTVNGVRVNIGSYRCKAGDVIEVREKSKQLVIVLESVSLAERDVPDYIEVDHNKMVATFARVPTLADVPYAVVMEPQLVVEFYSR</sequence>
<accession>B9JFR5</accession>
<comment type="function">
    <text evidence="1">One of the primary rRNA binding proteins, it binds directly to 16S rRNA where it nucleates assembly of the body of the 30S subunit.</text>
</comment>
<comment type="function">
    <text evidence="1">With S5 and S12 plays an important role in translational accuracy.</text>
</comment>
<comment type="subunit">
    <text evidence="1">Part of the 30S ribosomal subunit. Contacts protein S5. The interaction surface between S4 and S5 is involved in control of translational fidelity.</text>
</comment>
<comment type="similarity">
    <text evidence="1">Belongs to the universal ribosomal protein uS4 family.</text>
</comment>
<protein>
    <recommendedName>
        <fullName evidence="1">Small ribosomal subunit protein uS4</fullName>
    </recommendedName>
    <alternativeName>
        <fullName evidence="3">30S ribosomal protein S4</fullName>
    </alternativeName>
</protein>
<feature type="chain" id="PRO_1000165375" description="Small ribosomal subunit protein uS4">
    <location>
        <begin position="1"/>
        <end position="205"/>
    </location>
</feature>
<feature type="domain" description="S4 RNA-binding" evidence="1">
    <location>
        <begin position="94"/>
        <end position="157"/>
    </location>
</feature>
<feature type="region of interest" description="Disordered" evidence="2">
    <location>
        <begin position="1"/>
        <end position="46"/>
    </location>
</feature>
<feature type="compositionally biased region" description="Basic and acidic residues" evidence="2">
    <location>
        <begin position="1"/>
        <end position="16"/>
    </location>
</feature>
<dbReference type="EMBL" id="CP000628">
    <property type="protein sequence ID" value="ACM26755.1"/>
    <property type="molecule type" value="Genomic_DNA"/>
</dbReference>
<dbReference type="RefSeq" id="WP_007696347.1">
    <property type="nucleotide sequence ID" value="NC_011985.1"/>
</dbReference>
<dbReference type="SMR" id="B9JFR5"/>
<dbReference type="STRING" id="311403.Arad_2602"/>
<dbReference type="GeneID" id="86848615"/>
<dbReference type="KEGG" id="ara:Arad_2602"/>
<dbReference type="eggNOG" id="COG0522">
    <property type="taxonomic scope" value="Bacteria"/>
</dbReference>
<dbReference type="HOGENOM" id="CLU_092403_0_0_5"/>
<dbReference type="Proteomes" id="UP000001600">
    <property type="component" value="Chromosome 1"/>
</dbReference>
<dbReference type="GO" id="GO:0015935">
    <property type="term" value="C:small ribosomal subunit"/>
    <property type="evidence" value="ECO:0007669"/>
    <property type="project" value="InterPro"/>
</dbReference>
<dbReference type="GO" id="GO:0019843">
    <property type="term" value="F:rRNA binding"/>
    <property type="evidence" value="ECO:0007669"/>
    <property type="project" value="UniProtKB-UniRule"/>
</dbReference>
<dbReference type="GO" id="GO:0003735">
    <property type="term" value="F:structural constituent of ribosome"/>
    <property type="evidence" value="ECO:0007669"/>
    <property type="project" value="InterPro"/>
</dbReference>
<dbReference type="GO" id="GO:0042274">
    <property type="term" value="P:ribosomal small subunit biogenesis"/>
    <property type="evidence" value="ECO:0007669"/>
    <property type="project" value="TreeGrafter"/>
</dbReference>
<dbReference type="GO" id="GO:0006412">
    <property type="term" value="P:translation"/>
    <property type="evidence" value="ECO:0007669"/>
    <property type="project" value="UniProtKB-UniRule"/>
</dbReference>
<dbReference type="CDD" id="cd00165">
    <property type="entry name" value="S4"/>
    <property type="match status" value="1"/>
</dbReference>
<dbReference type="FunFam" id="3.10.290.10:FF:000001">
    <property type="entry name" value="30S ribosomal protein S4"/>
    <property type="match status" value="1"/>
</dbReference>
<dbReference type="Gene3D" id="1.10.1050.10">
    <property type="entry name" value="Ribosomal Protein S4 Delta 41, Chain A, domain 1"/>
    <property type="match status" value="1"/>
</dbReference>
<dbReference type="Gene3D" id="3.10.290.10">
    <property type="entry name" value="RNA-binding S4 domain"/>
    <property type="match status" value="1"/>
</dbReference>
<dbReference type="HAMAP" id="MF_01306_B">
    <property type="entry name" value="Ribosomal_uS4_B"/>
    <property type="match status" value="1"/>
</dbReference>
<dbReference type="InterPro" id="IPR022801">
    <property type="entry name" value="Ribosomal_uS4"/>
</dbReference>
<dbReference type="InterPro" id="IPR005709">
    <property type="entry name" value="Ribosomal_uS4_bac-type"/>
</dbReference>
<dbReference type="InterPro" id="IPR018079">
    <property type="entry name" value="Ribosomal_uS4_CS"/>
</dbReference>
<dbReference type="InterPro" id="IPR001912">
    <property type="entry name" value="Ribosomal_uS4_N"/>
</dbReference>
<dbReference type="InterPro" id="IPR002942">
    <property type="entry name" value="S4_RNA-bd"/>
</dbReference>
<dbReference type="InterPro" id="IPR036986">
    <property type="entry name" value="S4_RNA-bd_sf"/>
</dbReference>
<dbReference type="NCBIfam" id="NF003717">
    <property type="entry name" value="PRK05327.1"/>
    <property type="match status" value="1"/>
</dbReference>
<dbReference type="NCBIfam" id="TIGR01017">
    <property type="entry name" value="rpsD_bact"/>
    <property type="match status" value="1"/>
</dbReference>
<dbReference type="PANTHER" id="PTHR11831">
    <property type="entry name" value="30S 40S RIBOSOMAL PROTEIN"/>
    <property type="match status" value="1"/>
</dbReference>
<dbReference type="PANTHER" id="PTHR11831:SF4">
    <property type="entry name" value="SMALL RIBOSOMAL SUBUNIT PROTEIN US4M"/>
    <property type="match status" value="1"/>
</dbReference>
<dbReference type="Pfam" id="PF00163">
    <property type="entry name" value="Ribosomal_S4"/>
    <property type="match status" value="1"/>
</dbReference>
<dbReference type="Pfam" id="PF01479">
    <property type="entry name" value="S4"/>
    <property type="match status" value="1"/>
</dbReference>
<dbReference type="SMART" id="SM01390">
    <property type="entry name" value="Ribosomal_S4"/>
    <property type="match status" value="1"/>
</dbReference>
<dbReference type="SMART" id="SM00363">
    <property type="entry name" value="S4"/>
    <property type="match status" value="1"/>
</dbReference>
<dbReference type="SUPFAM" id="SSF55174">
    <property type="entry name" value="Alpha-L RNA-binding motif"/>
    <property type="match status" value="1"/>
</dbReference>
<dbReference type="PROSITE" id="PS00632">
    <property type="entry name" value="RIBOSOMAL_S4"/>
    <property type="match status" value="1"/>
</dbReference>
<dbReference type="PROSITE" id="PS50889">
    <property type="entry name" value="S4"/>
    <property type="match status" value="1"/>
</dbReference>
<proteinExistence type="inferred from homology"/>
<name>RS4_RHIR8</name>